<gene>
    <name evidence="1" type="primary">rplP</name>
    <name type="ordered locus">Wbm0334</name>
</gene>
<comment type="function">
    <text evidence="1">Binds 23S rRNA and is also seen to make contacts with the A and possibly P site tRNAs.</text>
</comment>
<comment type="subunit">
    <text evidence="1">Part of the 50S ribosomal subunit.</text>
</comment>
<comment type="similarity">
    <text evidence="1">Belongs to the universal ribosomal protein uL16 family.</text>
</comment>
<protein>
    <recommendedName>
        <fullName evidence="1">Large ribosomal subunit protein uL16</fullName>
    </recommendedName>
    <alternativeName>
        <fullName evidence="2">50S ribosomal protein L16</fullName>
    </alternativeName>
</protein>
<keyword id="KW-1185">Reference proteome</keyword>
<keyword id="KW-0687">Ribonucleoprotein</keyword>
<keyword id="KW-0689">Ribosomal protein</keyword>
<keyword id="KW-0694">RNA-binding</keyword>
<keyword id="KW-0699">rRNA-binding</keyword>
<keyword id="KW-0820">tRNA-binding</keyword>
<proteinExistence type="inferred from homology"/>
<organism>
    <name type="scientific">Wolbachia sp. subsp. Brugia malayi (strain TRS)</name>
    <dbReference type="NCBI Taxonomy" id="292805"/>
    <lineage>
        <taxon>Bacteria</taxon>
        <taxon>Pseudomonadati</taxon>
        <taxon>Pseudomonadota</taxon>
        <taxon>Alphaproteobacteria</taxon>
        <taxon>Rickettsiales</taxon>
        <taxon>Anaplasmataceae</taxon>
        <taxon>Wolbachieae</taxon>
        <taxon>Wolbachia</taxon>
    </lineage>
</organism>
<dbReference type="EMBL" id="AE017321">
    <property type="protein sequence ID" value="AAW70923.1"/>
    <property type="molecule type" value="Genomic_DNA"/>
</dbReference>
<dbReference type="RefSeq" id="WP_011256533.1">
    <property type="nucleotide sequence ID" value="NC_006833.1"/>
</dbReference>
<dbReference type="SMR" id="Q5GSV1"/>
<dbReference type="STRING" id="292805.Wbm0334"/>
<dbReference type="KEGG" id="wbm:Wbm0334"/>
<dbReference type="eggNOG" id="COG0197">
    <property type="taxonomic scope" value="Bacteria"/>
</dbReference>
<dbReference type="HOGENOM" id="CLU_078858_2_1_5"/>
<dbReference type="Proteomes" id="UP000000534">
    <property type="component" value="Chromosome"/>
</dbReference>
<dbReference type="GO" id="GO:0022625">
    <property type="term" value="C:cytosolic large ribosomal subunit"/>
    <property type="evidence" value="ECO:0007669"/>
    <property type="project" value="TreeGrafter"/>
</dbReference>
<dbReference type="GO" id="GO:0019843">
    <property type="term" value="F:rRNA binding"/>
    <property type="evidence" value="ECO:0007669"/>
    <property type="project" value="UniProtKB-UniRule"/>
</dbReference>
<dbReference type="GO" id="GO:0003735">
    <property type="term" value="F:structural constituent of ribosome"/>
    <property type="evidence" value="ECO:0007669"/>
    <property type="project" value="InterPro"/>
</dbReference>
<dbReference type="GO" id="GO:0000049">
    <property type="term" value="F:tRNA binding"/>
    <property type="evidence" value="ECO:0007669"/>
    <property type="project" value="UniProtKB-KW"/>
</dbReference>
<dbReference type="GO" id="GO:0006412">
    <property type="term" value="P:translation"/>
    <property type="evidence" value="ECO:0007669"/>
    <property type="project" value="UniProtKB-UniRule"/>
</dbReference>
<dbReference type="CDD" id="cd01433">
    <property type="entry name" value="Ribosomal_L16_L10e"/>
    <property type="match status" value="1"/>
</dbReference>
<dbReference type="FunFam" id="3.90.1170.10:FF:000001">
    <property type="entry name" value="50S ribosomal protein L16"/>
    <property type="match status" value="1"/>
</dbReference>
<dbReference type="Gene3D" id="3.90.1170.10">
    <property type="entry name" value="Ribosomal protein L10e/L16"/>
    <property type="match status" value="1"/>
</dbReference>
<dbReference type="HAMAP" id="MF_01342">
    <property type="entry name" value="Ribosomal_uL16"/>
    <property type="match status" value="1"/>
</dbReference>
<dbReference type="InterPro" id="IPR047873">
    <property type="entry name" value="Ribosomal_uL16"/>
</dbReference>
<dbReference type="InterPro" id="IPR000114">
    <property type="entry name" value="Ribosomal_uL16_bact-type"/>
</dbReference>
<dbReference type="InterPro" id="IPR020798">
    <property type="entry name" value="Ribosomal_uL16_CS"/>
</dbReference>
<dbReference type="InterPro" id="IPR016180">
    <property type="entry name" value="Ribosomal_uL16_dom"/>
</dbReference>
<dbReference type="InterPro" id="IPR036920">
    <property type="entry name" value="Ribosomal_uL16_sf"/>
</dbReference>
<dbReference type="NCBIfam" id="TIGR01164">
    <property type="entry name" value="rplP_bact"/>
    <property type="match status" value="1"/>
</dbReference>
<dbReference type="PANTHER" id="PTHR12220">
    <property type="entry name" value="50S/60S RIBOSOMAL PROTEIN L16"/>
    <property type="match status" value="1"/>
</dbReference>
<dbReference type="PANTHER" id="PTHR12220:SF13">
    <property type="entry name" value="LARGE RIBOSOMAL SUBUNIT PROTEIN UL16M"/>
    <property type="match status" value="1"/>
</dbReference>
<dbReference type="Pfam" id="PF00252">
    <property type="entry name" value="Ribosomal_L16"/>
    <property type="match status" value="1"/>
</dbReference>
<dbReference type="PRINTS" id="PR00060">
    <property type="entry name" value="RIBOSOMALL16"/>
</dbReference>
<dbReference type="SUPFAM" id="SSF54686">
    <property type="entry name" value="Ribosomal protein L16p/L10e"/>
    <property type="match status" value="1"/>
</dbReference>
<dbReference type="PROSITE" id="PS00586">
    <property type="entry name" value="RIBOSOMAL_L16_1"/>
    <property type="match status" value="1"/>
</dbReference>
<dbReference type="PROSITE" id="PS00701">
    <property type="entry name" value="RIBOSOMAL_L16_2"/>
    <property type="match status" value="1"/>
</dbReference>
<sequence>MFVPKKSKYRKVFKGRIKGNTKGGSTLSFGDYGLKTIEAGRVQSKHIETVRRVISRTLKRSGKIWIRIFPDTPISKKPTDVRMGKGKGSVEFWVFKAKPGRVLFEISSDVPMHLAKLALEKAMAKLPVKCKFISNYS</sequence>
<accession>Q5GSV1</accession>
<feature type="chain" id="PRO_0000062251" description="Large ribosomal subunit protein uL16">
    <location>
        <begin position="1"/>
        <end position="137"/>
    </location>
</feature>
<evidence type="ECO:0000255" key="1">
    <source>
        <dbReference type="HAMAP-Rule" id="MF_01342"/>
    </source>
</evidence>
<evidence type="ECO:0000305" key="2"/>
<reference key="1">
    <citation type="journal article" date="2005" name="PLoS Biol.">
        <title>The Wolbachia genome of Brugia malayi: endosymbiont evolution within a human pathogenic nematode.</title>
        <authorList>
            <person name="Foster J."/>
            <person name="Ganatra M."/>
            <person name="Kamal I."/>
            <person name="Ware J."/>
            <person name="Makarova K."/>
            <person name="Ivanova N."/>
            <person name="Bhattacharyya A."/>
            <person name="Kapatral V."/>
            <person name="Kumar S."/>
            <person name="Posfai J."/>
            <person name="Vincze T."/>
            <person name="Ingram J."/>
            <person name="Moran L."/>
            <person name="Lapidus A."/>
            <person name="Omelchenko M."/>
            <person name="Kyrpides N."/>
            <person name="Ghedin E."/>
            <person name="Wang S."/>
            <person name="Goltsman E."/>
            <person name="Joukov V."/>
            <person name="Ostrovskaya O."/>
            <person name="Tsukerman K."/>
            <person name="Mazur M."/>
            <person name="Comb D."/>
            <person name="Koonin E."/>
            <person name="Slatko B."/>
        </authorList>
    </citation>
    <scope>NUCLEOTIDE SEQUENCE [LARGE SCALE GENOMIC DNA]</scope>
    <source>
        <strain>TRS</strain>
    </source>
</reference>
<name>RL16_WOLTR</name>